<accession>P0A068</accession>
<accession>P72365</accession>
<sequence length="191" mass="21692">MKKELLEWIISIAVAFVILFIVGKFIVTPYTIKGESMDPTLKDGERVAVNIIGYKTGGLEKGNVVVFHANKNDDYVKRVIGVPGDKVEYKNDTLYVNGKKQDEPYLNYNLKHKQGDYITGTFQVKDLPNANPKSNVIPKGKYLVLGDNREVSKDSRAFGLIDEDQIVGKVSFRFWPFSEFKHNFNPENTKN</sequence>
<keyword id="KW-1003">Cell membrane</keyword>
<keyword id="KW-0378">Hydrolase</keyword>
<keyword id="KW-0472">Membrane</keyword>
<keyword id="KW-0645">Protease</keyword>
<keyword id="KW-0812">Transmembrane</keyword>
<keyword id="KW-1133">Transmembrane helix</keyword>
<name>LEP_STAAN</name>
<organism>
    <name type="scientific">Staphylococcus aureus (strain N315)</name>
    <dbReference type="NCBI Taxonomy" id="158879"/>
    <lineage>
        <taxon>Bacteria</taxon>
        <taxon>Bacillati</taxon>
        <taxon>Bacillota</taxon>
        <taxon>Bacilli</taxon>
        <taxon>Bacillales</taxon>
        <taxon>Staphylococcaceae</taxon>
        <taxon>Staphylococcus</taxon>
    </lineage>
</organism>
<protein>
    <recommendedName>
        <fullName>Signal peptidase IB</fullName>
        <shortName>SPase IB</shortName>
        <ecNumber>3.4.21.89</ecNumber>
    </recommendedName>
    <alternativeName>
        <fullName>Leader peptidase IB</fullName>
    </alternativeName>
</protein>
<reference key="1">
    <citation type="journal article" date="2001" name="Lancet">
        <title>Whole genome sequencing of meticillin-resistant Staphylococcus aureus.</title>
        <authorList>
            <person name="Kuroda M."/>
            <person name="Ohta T."/>
            <person name="Uchiyama I."/>
            <person name="Baba T."/>
            <person name="Yuzawa H."/>
            <person name="Kobayashi I."/>
            <person name="Cui L."/>
            <person name="Oguchi A."/>
            <person name="Aoki K."/>
            <person name="Nagai Y."/>
            <person name="Lian J.-Q."/>
            <person name="Ito T."/>
            <person name="Kanamori M."/>
            <person name="Matsumaru H."/>
            <person name="Maruyama A."/>
            <person name="Murakami H."/>
            <person name="Hosoyama A."/>
            <person name="Mizutani-Ui Y."/>
            <person name="Takahashi N.K."/>
            <person name="Sawano T."/>
            <person name="Inoue R."/>
            <person name="Kaito C."/>
            <person name="Sekimizu K."/>
            <person name="Hirakawa H."/>
            <person name="Kuhara S."/>
            <person name="Goto S."/>
            <person name="Yabuzaki J."/>
            <person name="Kanehisa M."/>
            <person name="Yamashita A."/>
            <person name="Oshima K."/>
            <person name="Furuya K."/>
            <person name="Yoshino C."/>
            <person name="Shiba T."/>
            <person name="Hattori M."/>
            <person name="Ogasawara N."/>
            <person name="Hayashi H."/>
            <person name="Hiramatsu K."/>
        </authorList>
    </citation>
    <scope>NUCLEOTIDE SEQUENCE [LARGE SCALE GENOMIC DNA]</scope>
    <source>
        <strain>N315</strain>
    </source>
</reference>
<reference key="2">
    <citation type="submission" date="2007-10" db="UniProtKB">
        <title>Shotgun proteomic analysis of total and membrane protein extracts of S. aureus strain N315.</title>
        <authorList>
            <person name="Vaezzadeh A.R."/>
            <person name="Deshusses J."/>
            <person name="Lescuyer P."/>
            <person name="Hochstrasser D.F."/>
        </authorList>
    </citation>
    <scope>IDENTIFICATION BY MASS SPECTROMETRY [LARGE SCALE ANALYSIS]</scope>
    <source>
        <strain>N315</strain>
    </source>
</reference>
<dbReference type="EC" id="3.4.21.89"/>
<dbReference type="EMBL" id="BA000018">
    <property type="protein sequence ID" value="BAB42065.1"/>
    <property type="molecule type" value="Genomic_DNA"/>
</dbReference>
<dbReference type="PIR" id="F89863">
    <property type="entry name" value="F89863"/>
</dbReference>
<dbReference type="SMR" id="P0A068"/>
<dbReference type="MEROPS" id="S26.016"/>
<dbReference type="EnsemblBacteria" id="BAB42065">
    <property type="protein sequence ID" value="BAB42065"/>
    <property type="gene ID" value="BAB42065"/>
</dbReference>
<dbReference type="KEGG" id="sau:SA0826"/>
<dbReference type="HOGENOM" id="CLU_028723_5_0_9"/>
<dbReference type="GO" id="GO:0005886">
    <property type="term" value="C:plasma membrane"/>
    <property type="evidence" value="ECO:0007669"/>
    <property type="project" value="UniProtKB-SubCell"/>
</dbReference>
<dbReference type="GO" id="GO:0004252">
    <property type="term" value="F:serine-type endopeptidase activity"/>
    <property type="evidence" value="ECO:0007669"/>
    <property type="project" value="UniProtKB-EC"/>
</dbReference>
<dbReference type="GO" id="GO:0006465">
    <property type="term" value="P:signal peptide processing"/>
    <property type="evidence" value="ECO:0007669"/>
    <property type="project" value="InterPro"/>
</dbReference>
<dbReference type="CDD" id="cd06530">
    <property type="entry name" value="S26_SPase_I"/>
    <property type="match status" value="1"/>
</dbReference>
<dbReference type="FunFam" id="2.10.109.10:FF:000008">
    <property type="entry name" value="Signal peptidase I"/>
    <property type="match status" value="1"/>
</dbReference>
<dbReference type="Gene3D" id="2.10.109.10">
    <property type="entry name" value="Umud Fragment, subunit A"/>
    <property type="match status" value="1"/>
</dbReference>
<dbReference type="InterPro" id="IPR036286">
    <property type="entry name" value="LexA/Signal_pep-like_sf"/>
</dbReference>
<dbReference type="InterPro" id="IPR000223">
    <property type="entry name" value="Pept_S26A_signal_pept_1"/>
</dbReference>
<dbReference type="InterPro" id="IPR019758">
    <property type="entry name" value="Pept_S26A_signal_pept_1_CS"/>
</dbReference>
<dbReference type="InterPro" id="IPR019757">
    <property type="entry name" value="Pept_S26A_signal_pept_1_Lys-AS"/>
</dbReference>
<dbReference type="InterPro" id="IPR019756">
    <property type="entry name" value="Pept_S26A_signal_pept_1_Ser-AS"/>
</dbReference>
<dbReference type="InterPro" id="IPR019533">
    <property type="entry name" value="Peptidase_S26"/>
</dbReference>
<dbReference type="NCBIfam" id="TIGR02227">
    <property type="entry name" value="sigpep_I_bact"/>
    <property type="match status" value="1"/>
</dbReference>
<dbReference type="PANTHER" id="PTHR43390:SF1">
    <property type="entry name" value="CHLOROPLAST PROCESSING PEPTIDASE"/>
    <property type="match status" value="1"/>
</dbReference>
<dbReference type="PANTHER" id="PTHR43390">
    <property type="entry name" value="SIGNAL PEPTIDASE I"/>
    <property type="match status" value="1"/>
</dbReference>
<dbReference type="Pfam" id="PF10502">
    <property type="entry name" value="Peptidase_S26"/>
    <property type="match status" value="1"/>
</dbReference>
<dbReference type="PRINTS" id="PR00727">
    <property type="entry name" value="LEADERPTASE"/>
</dbReference>
<dbReference type="SUPFAM" id="SSF51306">
    <property type="entry name" value="LexA/Signal peptidase"/>
    <property type="match status" value="1"/>
</dbReference>
<dbReference type="PROSITE" id="PS00501">
    <property type="entry name" value="SPASE_I_1"/>
    <property type="match status" value="1"/>
</dbReference>
<dbReference type="PROSITE" id="PS00760">
    <property type="entry name" value="SPASE_I_2"/>
    <property type="match status" value="1"/>
</dbReference>
<dbReference type="PROSITE" id="PS00761">
    <property type="entry name" value="SPASE_I_3"/>
    <property type="match status" value="1"/>
</dbReference>
<comment type="function">
    <text evidence="1">Essential for cell viability.</text>
</comment>
<comment type="catalytic activity">
    <reaction>
        <text>Cleavage of hydrophobic, N-terminal signal or leader sequences from secreted and periplasmic proteins.</text>
        <dbReference type="EC" id="3.4.21.89"/>
    </reaction>
</comment>
<comment type="subcellular location">
    <subcellularLocation>
        <location evidence="3">Cell membrane</location>
        <topology evidence="3">Single-pass type II membrane protein</topology>
    </subcellularLocation>
</comment>
<comment type="similarity">
    <text evidence="3">Belongs to the peptidase S26 family.</text>
</comment>
<feature type="chain" id="PRO_0000109528" description="Signal peptidase IB">
    <location>
        <begin position="1"/>
        <end position="191"/>
    </location>
</feature>
<feature type="topological domain" description="Cytoplasmic" evidence="2">
    <location>
        <begin position="1"/>
        <end position="7"/>
    </location>
</feature>
<feature type="transmembrane region" description="Helical" evidence="2">
    <location>
        <begin position="8"/>
        <end position="28"/>
    </location>
</feature>
<feature type="topological domain" description="Extracellular" evidence="2">
    <location>
        <begin position="29"/>
        <end position="191"/>
    </location>
</feature>
<feature type="active site" evidence="1">
    <location>
        <position position="36"/>
    </location>
</feature>
<feature type="active site" evidence="1">
    <location>
        <position position="77"/>
    </location>
</feature>
<evidence type="ECO:0000250" key="1"/>
<evidence type="ECO:0000255" key="2"/>
<evidence type="ECO:0000305" key="3"/>
<proteinExistence type="evidence at protein level"/>
<gene>
    <name type="primary">spsB</name>
    <name type="ordered locus">SA0826</name>
</gene>